<gene>
    <name type="primary">Tmem91</name>
    <name type="synonym">SynDIG3</name>
</gene>
<accession>Q8C581</accession>
<organism>
    <name type="scientific">Mus musculus</name>
    <name type="common">Mouse</name>
    <dbReference type="NCBI Taxonomy" id="10090"/>
    <lineage>
        <taxon>Eukaryota</taxon>
        <taxon>Metazoa</taxon>
        <taxon>Chordata</taxon>
        <taxon>Craniata</taxon>
        <taxon>Vertebrata</taxon>
        <taxon>Euteleostomi</taxon>
        <taxon>Mammalia</taxon>
        <taxon>Eutheria</taxon>
        <taxon>Euarchontoglires</taxon>
        <taxon>Glires</taxon>
        <taxon>Rodentia</taxon>
        <taxon>Myomorpha</taxon>
        <taxon>Muroidea</taxon>
        <taxon>Muridae</taxon>
        <taxon>Murinae</taxon>
        <taxon>Mus</taxon>
        <taxon>Mus</taxon>
    </lineage>
</organism>
<sequence length="172" mass="18085">MDNSSIQELQQPLLPSITCDLLAPRSEKPELGTPFPETAFAESPRGWQLLLPPLPSVSAGLGEPETPDFEDTLSSDSDSDDDGGDRLSPLLPHDHLGLAVFSVLCCFWPVGIAAFCLAHKTNKAWAKGDVQGAGAASRRAFLLGVLAVGLGLCTYAAALVTLAAYLASRDPP</sequence>
<reference key="1">
    <citation type="journal article" date="2005" name="Science">
        <title>The transcriptional landscape of the mammalian genome.</title>
        <authorList>
            <person name="Carninci P."/>
            <person name="Kasukawa T."/>
            <person name="Katayama S."/>
            <person name="Gough J."/>
            <person name="Frith M.C."/>
            <person name="Maeda N."/>
            <person name="Oyama R."/>
            <person name="Ravasi T."/>
            <person name="Lenhard B."/>
            <person name="Wells C."/>
            <person name="Kodzius R."/>
            <person name="Shimokawa K."/>
            <person name="Bajic V.B."/>
            <person name="Brenner S.E."/>
            <person name="Batalov S."/>
            <person name="Forrest A.R."/>
            <person name="Zavolan M."/>
            <person name="Davis M.J."/>
            <person name="Wilming L.G."/>
            <person name="Aidinis V."/>
            <person name="Allen J.E."/>
            <person name="Ambesi-Impiombato A."/>
            <person name="Apweiler R."/>
            <person name="Aturaliya R.N."/>
            <person name="Bailey T.L."/>
            <person name="Bansal M."/>
            <person name="Baxter L."/>
            <person name="Beisel K.W."/>
            <person name="Bersano T."/>
            <person name="Bono H."/>
            <person name="Chalk A.M."/>
            <person name="Chiu K.P."/>
            <person name="Choudhary V."/>
            <person name="Christoffels A."/>
            <person name="Clutterbuck D.R."/>
            <person name="Crowe M.L."/>
            <person name="Dalla E."/>
            <person name="Dalrymple B.P."/>
            <person name="de Bono B."/>
            <person name="Della Gatta G."/>
            <person name="di Bernardo D."/>
            <person name="Down T."/>
            <person name="Engstrom P."/>
            <person name="Fagiolini M."/>
            <person name="Faulkner G."/>
            <person name="Fletcher C.F."/>
            <person name="Fukushima T."/>
            <person name="Furuno M."/>
            <person name="Futaki S."/>
            <person name="Gariboldi M."/>
            <person name="Georgii-Hemming P."/>
            <person name="Gingeras T.R."/>
            <person name="Gojobori T."/>
            <person name="Green R.E."/>
            <person name="Gustincich S."/>
            <person name="Harbers M."/>
            <person name="Hayashi Y."/>
            <person name="Hensch T.K."/>
            <person name="Hirokawa N."/>
            <person name="Hill D."/>
            <person name="Huminiecki L."/>
            <person name="Iacono M."/>
            <person name="Ikeo K."/>
            <person name="Iwama A."/>
            <person name="Ishikawa T."/>
            <person name="Jakt M."/>
            <person name="Kanapin A."/>
            <person name="Katoh M."/>
            <person name="Kawasawa Y."/>
            <person name="Kelso J."/>
            <person name="Kitamura H."/>
            <person name="Kitano H."/>
            <person name="Kollias G."/>
            <person name="Krishnan S.P."/>
            <person name="Kruger A."/>
            <person name="Kummerfeld S.K."/>
            <person name="Kurochkin I.V."/>
            <person name="Lareau L.F."/>
            <person name="Lazarevic D."/>
            <person name="Lipovich L."/>
            <person name="Liu J."/>
            <person name="Liuni S."/>
            <person name="McWilliam S."/>
            <person name="Madan Babu M."/>
            <person name="Madera M."/>
            <person name="Marchionni L."/>
            <person name="Matsuda H."/>
            <person name="Matsuzawa S."/>
            <person name="Miki H."/>
            <person name="Mignone F."/>
            <person name="Miyake S."/>
            <person name="Morris K."/>
            <person name="Mottagui-Tabar S."/>
            <person name="Mulder N."/>
            <person name="Nakano N."/>
            <person name="Nakauchi H."/>
            <person name="Ng P."/>
            <person name="Nilsson R."/>
            <person name="Nishiguchi S."/>
            <person name="Nishikawa S."/>
            <person name="Nori F."/>
            <person name="Ohara O."/>
            <person name="Okazaki Y."/>
            <person name="Orlando V."/>
            <person name="Pang K.C."/>
            <person name="Pavan W.J."/>
            <person name="Pavesi G."/>
            <person name="Pesole G."/>
            <person name="Petrovsky N."/>
            <person name="Piazza S."/>
            <person name="Reed J."/>
            <person name="Reid J.F."/>
            <person name="Ring B.Z."/>
            <person name="Ringwald M."/>
            <person name="Rost B."/>
            <person name="Ruan Y."/>
            <person name="Salzberg S.L."/>
            <person name="Sandelin A."/>
            <person name="Schneider C."/>
            <person name="Schoenbach C."/>
            <person name="Sekiguchi K."/>
            <person name="Semple C.A."/>
            <person name="Seno S."/>
            <person name="Sessa L."/>
            <person name="Sheng Y."/>
            <person name="Shibata Y."/>
            <person name="Shimada H."/>
            <person name="Shimada K."/>
            <person name="Silva D."/>
            <person name="Sinclair B."/>
            <person name="Sperling S."/>
            <person name="Stupka E."/>
            <person name="Sugiura K."/>
            <person name="Sultana R."/>
            <person name="Takenaka Y."/>
            <person name="Taki K."/>
            <person name="Tammoja K."/>
            <person name="Tan S.L."/>
            <person name="Tang S."/>
            <person name="Taylor M.S."/>
            <person name="Tegner J."/>
            <person name="Teichmann S.A."/>
            <person name="Ueda H.R."/>
            <person name="van Nimwegen E."/>
            <person name="Verardo R."/>
            <person name="Wei C.L."/>
            <person name="Yagi K."/>
            <person name="Yamanishi H."/>
            <person name="Zabarovsky E."/>
            <person name="Zhu S."/>
            <person name="Zimmer A."/>
            <person name="Hide W."/>
            <person name="Bult C."/>
            <person name="Grimmond S.M."/>
            <person name="Teasdale R.D."/>
            <person name="Liu E.T."/>
            <person name="Brusic V."/>
            <person name="Quackenbush J."/>
            <person name="Wahlestedt C."/>
            <person name="Mattick J.S."/>
            <person name="Hume D.A."/>
            <person name="Kai C."/>
            <person name="Sasaki D."/>
            <person name="Tomaru Y."/>
            <person name="Fukuda S."/>
            <person name="Kanamori-Katayama M."/>
            <person name="Suzuki M."/>
            <person name="Aoki J."/>
            <person name="Arakawa T."/>
            <person name="Iida J."/>
            <person name="Imamura K."/>
            <person name="Itoh M."/>
            <person name="Kato T."/>
            <person name="Kawaji H."/>
            <person name="Kawagashira N."/>
            <person name="Kawashima T."/>
            <person name="Kojima M."/>
            <person name="Kondo S."/>
            <person name="Konno H."/>
            <person name="Nakano K."/>
            <person name="Ninomiya N."/>
            <person name="Nishio T."/>
            <person name="Okada M."/>
            <person name="Plessy C."/>
            <person name="Shibata K."/>
            <person name="Shiraki T."/>
            <person name="Suzuki S."/>
            <person name="Tagami M."/>
            <person name="Waki K."/>
            <person name="Watahiki A."/>
            <person name="Okamura-Oho Y."/>
            <person name="Suzuki H."/>
            <person name="Kawai J."/>
            <person name="Hayashizaki Y."/>
        </authorList>
    </citation>
    <scope>NUCLEOTIDE SEQUENCE [LARGE SCALE MRNA]</scope>
    <source>
        <strain>C57BL/6J</strain>
        <tissue>Cerebellum</tissue>
    </source>
</reference>
<reference key="2">
    <citation type="journal article" date="2004" name="Genome Res.">
        <title>The status, quality, and expansion of the NIH full-length cDNA project: the Mammalian Gene Collection (MGC).</title>
        <authorList>
            <consortium name="The MGC Project Team"/>
        </authorList>
    </citation>
    <scope>NUCLEOTIDE SEQUENCE [LARGE SCALE MRNA]</scope>
    <source>
        <strain>C57BL/6J</strain>
        <tissue>Brain</tissue>
    </source>
</reference>
<reference key="3">
    <citation type="journal article" date="2012" name="PLoS ONE">
        <title>The dispanins: a novel gene family of ancient origin that contains 14 human members.</title>
        <authorList>
            <person name="Sallman Almen M."/>
            <person name="Bringeland N."/>
            <person name="Fredriksson R."/>
            <person name="Schioth H.B."/>
        </authorList>
    </citation>
    <scope>GENE FAMILY</scope>
</reference>
<proteinExistence type="evidence at transcript level"/>
<feature type="chain" id="PRO_0000135700" description="Transmembrane protein 91">
    <location>
        <begin position="1"/>
        <end position="172"/>
    </location>
</feature>
<feature type="topological domain" description="Extracellular" evidence="1">
    <location>
        <begin position="1"/>
        <end position="97"/>
    </location>
</feature>
<feature type="transmembrane region" description="Helical" evidence="1">
    <location>
        <begin position="98"/>
        <end position="118"/>
    </location>
</feature>
<feature type="topological domain" description="Cytoplasmic" evidence="1">
    <location>
        <begin position="119"/>
        <end position="139"/>
    </location>
</feature>
<feature type="transmembrane region" description="Helical" evidence="1">
    <location>
        <begin position="140"/>
        <end position="160"/>
    </location>
</feature>
<feature type="topological domain" description="Extracellular" evidence="1">
    <location>
        <begin position="161"/>
        <end position="172"/>
    </location>
</feature>
<feature type="region of interest" description="Disordered" evidence="2">
    <location>
        <begin position="60"/>
        <end position="86"/>
    </location>
</feature>
<feature type="compositionally biased region" description="Acidic residues" evidence="2">
    <location>
        <begin position="65"/>
        <end position="83"/>
    </location>
</feature>
<evidence type="ECO:0000255" key="1"/>
<evidence type="ECO:0000256" key="2">
    <source>
        <dbReference type="SAM" id="MobiDB-lite"/>
    </source>
</evidence>
<evidence type="ECO:0000305" key="3"/>
<name>TMM91_MOUSE</name>
<keyword id="KW-0472">Membrane</keyword>
<keyword id="KW-1185">Reference proteome</keyword>
<keyword id="KW-0812">Transmembrane</keyword>
<keyword id="KW-1133">Transmembrane helix</keyword>
<protein>
    <recommendedName>
        <fullName>Transmembrane protein 91</fullName>
    </recommendedName>
    <alternativeName>
        <fullName>Dispanin subfamily C member 3</fullName>
        <shortName>DSPC3</shortName>
    </alternativeName>
    <alternativeName>
        <fullName>Synapse differentiation-induced protein 3</fullName>
    </alternativeName>
</protein>
<comment type="subcellular location">
    <subcellularLocation>
        <location evidence="3">Membrane</location>
        <topology evidence="3">Multi-pass membrane protein</topology>
    </subcellularLocation>
</comment>
<comment type="similarity">
    <text evidence="3">Belongs to the CD225/Dispanin family.</text>
</comment>
<dbReference type="EMBL" id="AK079312">
    <property type="protein sequence ID" value="BAC37604.1"/>
    <property type="molecule type" value="mRNA"/>
</dbReference>
<dbReference type="EMBL" id="BC058996">
    <property type="protein sequence ID" value="AAH58996.1"/>
    <property type="molecule type" value="mRNA"/>
</dbReference>
<dbReference type="CCDS" id="CCDS39840.1"/>
<dbReference type="RefSeq" id="NP_001277426.1">
    <property type="nucleotide sequence ID" value="NM_001290497.1"/>
</dbReference>
<dbReference type="RefSeq" id="NP_001277427.1">
    <property type="nucleotide sequence ID" value="NM_001290498.1"/>
</dbReference>
<dbReference type="RefSeq" id="NP_796076.1">
    <property type="nucleotide sequence ID" value="NM_177102.4"/>
</dbReference>
<dbReference type="RefSeq" id="XP_006540130.1">
    <property type="nucleotide sequence ID" value="XM_006540067.5"/>
</dbReference>
<dbReference type="RefSeq" id="XP_006540131.1">
    <property type="nucleotide sequence ID" value="XM_006540068.5"/>
</dbReference>
<dbReference type="RefSeq" id="XP_006540132.1">
    <property type="nucleotide sequence ID" value="XM_006540069.5"/>
</dbReference>
<dbReference type="FunCoup" id="Q8C581">
    <property type="interactions" value="44"/>
</dbReference>
<dbReference type="STRING" id="10090.ENSMUSP00000078407"/>
<dbReference type="iPTMnet" id="Q8C581"/>
<dbReference type="PhosphoSitePlus" id="Q8C581"/>
<dbReference type="PaxDb" id="10090-ENSMUSP00000078407"/>
<dbReference type="Antibodypedia" id="35353">
    <property type="antibodies" value="74 antibodies from 14 providers"/>
</dbReference>
<dbReference type="Ensembl" id="ENSMUST00000079439.10">
    <property type="protein sequence ID" value="ENSMUSP00000078407.4"/>
    <property type="gene ID" value="ENSMUSG00000061702.11"/>
</dbReference>
<dbReference type="GeneID" id="320208"/>
<dbReference type="KEGG" id="mmu:320208"/>
<dbReference type="UCSC" id="uc009ftk.2">
    <property type="organism name" value="mouse"/>
</dbReference>
<dbReference type="AGR" id="MGI:2443589"/>
<dbReference type="CTD" id="641649"/>
<dbReference type="MGI" id="MGI:2443589">
    <property type="gene designation" value="Tmem91"/>
</dbReference>
<dbReference type="VEuPathDB" id="HostDB:ENSMUSG00000061702"/>
<dbReference type="eggNOG" id="ENOG502TEEM">
    <property type="taxonomic scope" value="Eukaryota"/>
</dbReference>
<dbReference type="GeneTree" id="ENSGT00950000183147"/>
<dbReference type="HOGENOM" id="CLU_094250_1_0_1"/>
<dbReference type="InParanoid" id="Q8C581"/>
<dbReference type="OMA" id="DWDGGGH"/>
<dbReference type="OrthoDB" id="10018862at2759"/>
<dbReference type="PhylomeDB" id="Q8C581"/>
<dbReference type="TreeFam" id="TF331357"/>
<dbReference type="BioGRID-ORCS" id="320208">
    <property type="hits" value="3 hits in 77 CRISPR screens"/>
</dbReference>
<dbReference type="PRO" id="PR:Q8C581"/>
<dbReference type="Proteomes" id="UP000000589">
    <property type="component" value="Chromosome 7"/>
</dbReference>
<dbReference type="RNAct" id="Q8C581">
    <property type="molecule type" value="protein"/>
</dbReference>
<dbReference type="Bgee" id="ENSMUSG00000061702">
    <property type="expression patterns" value="Expressed in embryonic brain and 82 other cell types or tissues"/>
</dbReference>
<dbReference type="ExpressionAtlas" id="Q8C581">
    <property type="expression patterns" value="baseline and differential"/>
</dbReference>
<dbReference type="GO" id="GO:0016020">
    <property type="term" value="C:membrane"/>
    <property type="evidence" value="ECO:0007669"/>
    <property type="project" value="UniProtKB-SubCell"/>
</dbReference>
<dbReference type="GO" id="GO:0002244">
    <property type="term" value="P:hematopoietic progenitor cell differentiation"/>
    <property type="evidence" value="ECO:0000315"/>
    <property type="project" value="MGI"/>
</dbReference>
<dbReference type="InterPro" id="IPR007593">
    <property type="entry name" value="CD225/Dispanin_fam"/>
</dbReference>
<dbReference type="PANTHER" id="PTHR14768:SF2">
    <property type="entry name" value="TRANSMEMBRANE PROTEIN 91"/>
    <property type="match status" value="1"/>
</dbReference>
<dbReference type="PANTHER" id="PTHR14768">
    <property type="entry name" value="UPF0338 PROTEIN"/>
    <property type="match status" value="1"/>
</dbReference>
<dbReference type="Pfam" id="PF04505">
    <property type="entry name" value="CD225"/>
    <property type="match status" value="1"/>
</dbReference>